<organism>
    <name type="scientific">Symbiobacterium thermophilum (strain DSM 24528 / JCM 14929 / IAM 14863 / T)</name>
    <dbReference type="NCBI Taxonomy" id="292459"/>
    <lineage>
        <taxon>Bacteria</taxon>
        <taxon>Bacillati</taxon>
        <taxon>Bacillota</taxon>
        <taxon>Clostridia</taxon>
        <taxon>Eubacteriales</taxon>
        <taxon>Symbiobacteriaceae</taxon>
        <taxon>Symbiobacterium</taxon>
    </lineage>
</organism>
<name>LIPA_SYMTH</name>
<keyword id="KW-0004">4Fe-4S</keyword>
<keyword id="KW-0963">Cytoplasm</keyword>
<keyword id="KW-0408">Iron</keyword>
<keyword id="KW-0411">Iron-sulfur</keyword>
<keyword id="KW-0479">Metal-binding</keyword>
<keyword id="KW-1185">Reference proteome</keyword>
<keyword id="KW-0949">S-adenosyl-L-methionine</keyword>
<keyword id="KW-0808">Transferase</keyword>
<evidence type="ECO:0000255" key="1">
    <source>
        <dbReference type="HAMAP-Rule" id="MF_00206"/>
    </source>
</evidence>
<evidence type="ECO:0000255" key="2">
    <source>
        <dbReference type="PROSITE-ProRule" id="PRU01266"/>
    </source>
</evidence>
<evidence type="ECO:0000256" key="3">
    <source>
        <dbReference type="SAM" id="MobiDB-lite"/>
    </source>
</evidence>
<gene>
    <name evidence="1" type="primary">lipA</name>
    <name type="ordered locus">STH2153</name>
</gene>
<comment type="function">
    <text evidence="1">Catalyzes the radical-mediated insertion of two sulfur atoms into the C-6 and C-8 positions of the octanoyl moiety bound to the lipoyl domains of lipoate-dependent enzymes, thereby converting the octanoylated domains into lipoylated derivatives.</text>
</comment>
<comment type="catalytic activity">
    <reaction evidence="1">
        <text>[[Fe-S] cluster scaffold protein carrying a second [4Fe-4S](2+) cluster] + N(6)-octanoyl-L-lysyl-[protein] + 2 oxidized [2Fe-2S]-[ferredoxin] + 2 S-adenosyl-L-methionine + 4 H(+) = [[Fe-S] cluster scaffold protein] + N(6)-[(R)-dihydrolipoyl]-L-lysyl-[protein] + 4 Fe(3+) + 2 hydrogen sulfide + 2 5'-deoxyadenosine + 2 L-methionine + 2 reduced [2Fe-2S]-[ferredoxin]</text>
        <dbReference type="Rhea" id="RHEA:16585"/>
        <dbReference type="Rhea" id="RHEA-COMP:9928"/>
        <dbReference type="Rhea" id="RHEA-COMP:10000"/>
        <dbReference type="Rhea" id="RHEA-COMP:10001"/>
        <dbReference type="Rhea" id="RHEA-COMP:10475"/>
        <dbReference type="Rhea" id="RHEA-COMP:14568"/>
        <dbReference type="Rhea" id="RHEA-COMP:14569"/>
        <dbReference type="ChEBI" id="CHEBI:15378"/>
        <dbReference type="ChEBI" id="CHEBI:17319"/>
        <dbReference type="ChEBI" id="CHEBI:29034"/>
        <dbReference type="ChEBI" id="CHEBI:29919"/>
        <dbReference type="ChEBI" id="CHEBI:33722"/>
        <dbReference type="ChEBI" id="CHEBI:33737"/>
        <dbReference type="ChEBI" id="CHEBI:33738"/>
        <dbReference type="ChEBI" id="CHEBI:57844"/>
        <dbReference type="ChEBI" id="CHEBI:59789"/>
        <dbReference type="ChEBI" id="CHEBI:78809"/>
        <dbReference type="ChEBI" id="CHEBI:83100"/>
        <dbReference type="EC" id="2.8.1.8"/>
    </reaction>
</comment>
<comment type="cofactor">
    <cofactor evidence="1">
        <name>[4Fe-4S] cluster</name>
        <dbReference type="ChEBI" id="CHEBI:49883"/>
    </cofactor>
    <text evidence="1">Binds 2 [4Fe-4S] clusters per subunit. One cluster is coordinated with 3 cysteines and an exchangeable S-adenosyl-L-methionine.</text>
</comment>
<comment type="pathway">
    <text evidence="1">Protein modification; protein lipoylation via endogenous pathway; protein N(6)-(lipoyl)lysine from octanoyl-[acyl-carrier-protein]: step 2/2.</text>
</comment>
<comment type="subcellular location">
    <subcellularLocation>
        <location evidence="1">Cytoplasm</location>
    </subcellularLocation>
</comment>
<comment type="similarity">
    <text evidence="1">Belongs to the radical SAM superfamily. Lipoyl synthase family.</text>
</comment>
<dbReference type="EC" id="2.8.1.8" evidence="1"/>
<dbReference type="EMBL" id="AP006840">
    <property type="protein sequence ID" value="BAD41138.1"/>
    <property type="molecule type" value="Genomic_DNA"/>
</dbReference>
<dbReference type="SMR" id="Q67MF5"/>
<dbReference type="STRING" id="292459.STH2153"/>
<dbReference type="KEGG" id="sth:STH2153"/>
<dbReference type="eggNOG" id="COG0320">
    <property type="taxonomic scope" value="Bacteria"/>
</dbReference>
<dbReference type="HOGENOM" id="CLU_033144_2_1_9"/>
<dbReference type="UniPathway" id="UPA00538">
    <property type="reaction ID" value="UER00593"/>
</dbReference>
<dbReference type="Proteomes" id="UP000000417">
    <property type="component" value="Chromosome"/>
</dbReference>
<dbReference type="GO" id="GO:0005737">
    <property type="term" value="C:cytoplasm"/>
    <property type="evidence" value="ECO:0007669"/>
    <property type="project" value="UniProtKB-SubCell"/>
</dbReference>
<dbReference type="GO" id="GO:0051539">
    <property type="term" value="F:4 iron, 4 sulfur cluster binding"/>
    <property type="evidence" value="ECO:0007669"/>
    <property type="project" value="UniProtKB-UniRule"/>
</dbReference>
<dbReference type="GO" id="GO:0016992">
    <property type="term" value="F:lipoate synthase activity"/>
    <property type="evidence" value="ECO:0007669"/>
    <property type="project" value="UniProtKB-UniRule"/>
</dbReference>
<dbReference type="GO" id="GO:0046872">
    <property type="term" value="F:metal ion binding"/>
    <property type="evidence" value="ECO:0007669"/>
    <property type="project" value="UniProtKB-KW"/>
</dbReference>
<dbReference type="CDD" id="cd01335">
    <property type="entry name" value="Radical_SAM"/>
    <property type="match status" value="1"/>
</dbReference>
<dbReference type="FunFam" id="3.20.20.70:FF:000040">
    <property type="entry name" value="Lipoyl synthase"/>
    <property type="match status" value="1"/>
</dbReference>
<dbReference type="Gene3D" id="3.20.20.70">
    <property type="entry name" value="Aldolase class I"/>
    <property type="match status" value="1"/>
</dbReference>
<dbReference type="HAMAP" id="MF_00206">
    <property type="entry name" value="Lipoyl_synth"/>
    <property type="match status" value="1"/>
</dbReference>
<dbReference type="InterPro" id="IPR013785">
    <property type="entry name" value="Aldolase_TIM"/>
</dbReference>
<dbReference type="InterPro" id="IPR006638">
    <property type="entry name" value="Elp3/MiaA/NifB-like_rSAM"/>
</dbReference>
<dbReference type="InterPro" id="IPR031691">
    <property type="entry name" value="LIAS_N"/>
</dbReference>
<dbReference type="InterPro" id="IPR003698">
    <property type="entry name" value="Lipoyl_synth"/>
</dbReference>
<dbReference type="InterPro" id="IPR007197">
    <property type="entry name" value="rSAM"/>
</dbReference>
<dbReference type="NCBIfam" id="TIGR00510">
    <property type="entry name" value="lipA"/>
    <property type="match status" value="1"/>
</dbReference>
<dbReference type="NCBIfam" id="NF004019">
    <property type="entry name" value="PRK05481.1"/>
    <property type="match status" value="1"/>
</dbReference>
<dbReference type="NCBIfam" id="NF009544">
    <property type="entry name" value="PRK12928.1"/>
    <property type="match status" value="1"/>
</dbReference>
<dbReference type="PANTHER" id="PTHR10949">
    <property type="entry name" value="LIPOYL SYNTHASE"/>
    <property type="match status" value="1"/>
</dbReference>
<dbReference type="PANTHER" id="PTHR10949:SF0">
    <property type="entry name" value="LIPOYL SYNTHASE, MITOCHONDRIAL"/>
    <property type="match status" value="1"/>
</dbReference>
<dbReference type="Pfam" id="PF16881">
    <property type="entry name" value="LIAS_N"/>
    <property type="match status" value="1"/>
</dbReference>
<dbReference type="Pfam" id="PF04055">
    <property type="entry name" value="Radical_SAM"/>
    <property type="match status" value="1"/>
</dbReference>
<dbReference type="PIRSF" id="PIRSF005963">
    <property type="entry name" value="Lipoyl_synth"/>
    <property type="match status" value="1"/>
</dbReference>
<dbReference type="SFLD" id="SFLDF00271">
    <property type="entry name" value="lipoyl_synthase"/>
    <property type="match status" value="1"/>
</dbReference>
<dbReference type="SFLD" id="SFLDS00029">
    <property type="entry name" value="Radical_SAM"/>
    <property type="match status" value="1"/>
</dbReference>
<dbReference type="SMART" id="SM00729">
    <property type="entry name" value="Elp3"/>
    <property type="match status" value="1"/>
</dbReference>
<dbReference type="SUPFAM" id="SSF102114">
    <property type="entry name" value="Radical SAM enzymes"/>
    <property type="match status" value="1"/>
</dbReference>
<dbReference type="PROSITE" id="PS51918">
    <property type="entry name" value="RADICAL_SAM"/>
    <property type="match status" value="1"/>
</dbReference>
<accession>Q67MF5</accession>
<reference key="1">
    <citation type="journal article" date="2004" name="Nucleic Acids Res.">
        <title>Genome sequence of Symbiobacterium thermophilum, an uncultivable bacterium that depends on microbial commensalism.</title>
        <authorList>
            <person name="Ueda K."/>
            <person name="Yamashita A."/>
            <person name="Ishikawa J."/>
            <person name="Shimada M."/>
            <person name="Watsuji T."/>
            <person name="Morimura K."/>
            <person name="Ikeda H."/>
            <person name="Hattori M."/>
            <person name="Beppu T."/>
        </authorList>
    </citation>
    <scope>NUCLEOTIDE SEQUENCE [LARGE SCALE GENOMIC DNA]</scope>
    <source>
        <strain>DSM 24528 / JCM 14929 / IAM 14863 / T</strain>
    </source>
</reference>
<proteinExistence type="inferred from homology"/>
<sequence>MAEFRIDPEMELPVLPSRARADVSRKPEWLKINLRTDAEFVELKRLMRGQGLHTVCEEARCPNIFECWNRRTATFMILGDICTRNCGFCAVRSGVPTGLDLAEPERVADACVQLGLRHVVVTSVARDDLSDGGASIFAETIRAIRRKNPFTGVEVLIPDFGGNWDALAVVMDAEPDVLNHNIETVRRLSDRVRSRAKYDRSLELLRRAKEMKPHVSTKSSIMVGLGETMQELYEAMDDLRAAGVDIVTFGQYLRPTARHLAVEKFYTPAEFEHLREEALKRGFAHCESGPLVRSSYHADEQSAQAVARRTGAGRAAQTGD</sequence>
<protein>
    <recommendedName>
        <fullName evidence="1">Lipoyl synthase</fullName>
        <ecNumber evidence="1">2.8.1.8</ecNumber>
    </recommendedName>
    <alternativeName>
        <fullName evidence="1">Lip-syn</fullName>
        <shortName evidence="1">LS</shortName>
    </alternativeName>
    <alternativeName>
        <fullName evidence="1">Lipoate synthase</fullName>
    </alternativeName>
    <alternativeName>
        <fullName evidence="1">Lipoic acid synthase</fullName>
    </alternativeName>
    <alternativeName>
        <fullName evidence="1">Sulfur insertion protein LipA</fullName>
    </alternativeName>
</protein>
<feature type="chain" id="PRO_0000325315" description="Lipoyl synthase">
    <location>
        <begin position="1"/>
        <end position="320"/>
    </location>
</feature>
<feature type="domain" description="Radical SAM core" evidence="2">
    <location>
        <begin position="68"/>
        <end position="284"/>
    </location>
</feature>
<feature type="region of interest" description="Disordered" evidence="3">
    <location>
        <begin position="300"/>
        <end position="320"/>
    </location>
</feature>
<feature type="compositionally biased region" description="Low complexity" evidence="3">
    <location>
        <begin position="303"/>
        <end position="320"/>
    </location>
</feature>
<feature type="binding site" evidence="1">
    <location>
        <position position="56"/>
    </location>
    <ligand>
        <name>[4Fe-4S] cluster</name>
        <dbReference type="ChEBI" id="CHEBI:49883"/>
        <label>1</label>
    </ligand>
</feature>
<feature type="binding site" evidence="1">
    <location>
        <position position="61"/>
    </location>
    <ligand>
        <name>[4Fe-4S] cluster</name>
        <dbReference type="ChEBI" id="CHEBI:49883"/>
        <label>1</label>
    </ligand>
</feature>
<feature type="binding site" evidence="1">
    <location>
        <position position="67"/>
    </location>
    <ligand>
        <name>[4Fe-4S] cluster</name>
        <dbReference type="ChEBI" id="CHEBI:49883"/>
        <label>1</label>
    </ligand>
</feature>
<feature type="binding site" evidence="1">
    <location>
        <position position="82"/>
    </location>
    <ligand>
        <name>[4Fe-4S] cluster</name>
        <dbReference type="ChEBI" id="CHEBI:49883"/>
        <label>2</label>
        <note>4Fe-4S-S-AdoMet</note>
    </ligand>
</feature>
<feature type="binding site" evidence="1">
    <location>
        <position position="86"/>
    </location>
    <ligand>
        <name>[4Fe-4S] cluster</name>
        <dbReference type="ChEBI" id="CHEBI:49883"/>
        <label>2</label>
        <note>4Fe-4S-S-AdoMet</note>
    </ligand>
</feature>
<feature type="binding site" evidence="1">
    <location>
        <position position="89"/>
    </location>
    <ligand>
        <name>[4Fe-4S] cluster</name>
        <dbReference type="ChEBI" id="CHEBI:49883"/>
        <label>2</label>
        <note>4Fe-4S-S-AdoMet</note>
    </ligand>
</feature>
<feature type="binding site" evidence="1">
    <location>
        <position position="295"/>
    </location>
    <ligand>
        <name>[4Fe-4S] cluster</name>
        <dbReference type="ChEBI" id="CHEBI:49883"/>
        <label>1</label>
    </ligand>
</feature>